<geneLocation type="plasmid">
    <name>pVS1</name>
</geneLocation>
<gene>
    <name type="primary">merD</name>
</gene>
<accession>P06689</accession>
<feature type="chain" id="PRO_0000098130" description="HTH-type transcriptional regulator MerD">
    <location>
        <begin position="1"/>
        <end position="121"/>
    </location>
</feature>
<feature type="domain" description="HTH merR-type" evidence="1">
    <location>
        <begin position="3"/>
        <end position="72"/>
    </location>
</feature>
<feature type="DNA-binding region" description="H-T-H motif" evidence="1">
    <location>
        <begin position="6"/>
        <end position="25"/>
    </location>
</feature>
<reference key="1">
    <citation type="journal article" date="1986" name="Mol. Gen. Genet.">
        <title>The nucleotide sequence of the mercuric resistance operons of plasmid R100 and transposon Tn501: further evidence for mer genes which enhance the activity of the mercuric ion detoxification system.</title>
        <authorList>
            <person name="Brown N.L."/>
            <person name="Misra T.K."/>
            <person name="Winnie J.N."/>
            <person name="Schmidt A."/>
            <person name="Seiff M."/>
            <person name="Silver S."/>
        </authorList>
    </citation>
    <scope>NUCLEOTIDE SEQUENCE [GENOMIC DNA]</scope>
    <source>
        <transposon>Tn501</transposon>
    </source>
</reference>
<protein>
    <recommendedName>
        <fullName>HTH-type transcriptional regulator MerD</fullName>
    </recommendedName>
    <alternativeName>
        <fullName>Mercuric resistance protein MerD</fullName>
    </alternativeName>
</protein>
<name>MERD_PSEAI</name>
<dbReference type="EMBL" id="Z00027">
    <property type="protein sequence ID" value="CAA77324.1"/>
    <property type="molecule type" value="Genomic_DNA"/>
</dbReference>
<dbReference type="PIR" id="C29503">
    <property type="entry name" value="C29503"/>
</dbReference>
<dbReference type="RefSeq" id="WP_032488411.1">
    <property type="nucleotide sequence ID" value="NZ_UAWV01000011.1"/>
</dbReference>
<dbReference type="SMR" id="P06689"/>
<dbReference type="eggNOG" id="COG0789">
    <property type="taxonomic scope" value="Bacteria"/>
</dbReference>
<dbReference type="GO" id="GO:0003677">
    <property type="term" value="F:DNA binding"/>
    <property type="evidence" value="ECO:0007669"/>
    <property type="project" value="UniProtKB-KW"/>
</dbReference>
<dbReference type="GO" id="GO:0003700">
    <property type="term" value="F:DNA-binding transcription factor activity"/>
    <property type="evidence" value="ECO:0007669"/>
    <property type="project" value="InterPro"/>
</dbReference>
<dbReference type="GO" id="GO:0045892">
    <property type="term" value="P:negative regulation of DNA-templated transcription"/>
    <property type="evidence" value="ECO:0007669"/>
    <property type="project" value="InterPro"/>
</dbReference>
<dbReference type="GO" id="GO:0046689">
    <property type="term" value="P:response to mercury ion"/>
    <property type="evidence" value="ECO:0007669"/>
    <property type="project" value="UniProtKB-KW"/>
</dbReference>
<dbReference type="CDD" id="cd01111">
    <property type="entry name" value="HTH_MerD"/>
    <property type="match status" value="1"/>
</dbReference>
<dbReference type="Gene3D" id="1.10.1660.10">
    <property type="match status" value="1"/>
</dbReference>
<dbReference type="InterPro" id="IPR009061">
    <property type="entry name" value="DNA-bd_dom_put_sf"/>
</dbReference>
<dbReference type="InterPro" id="IPR011797">
    <property type="entry name" value="MerD"/>
</dbReference>
<dbReference type="InterPro" id="IPR000551">
    <property type="entry name" value="MerR-type_HTH_dom"/>
</dbReference>
<dbReference type="InterPro" id="IPR047057">
    <property type="entry name" value="MerR_fam"/>
</dbReference>
<dbReference type="NCBIfam" id="NF033783">
    <property type="entry name" value="coreg_MerD"/>
    <property type="match status" value="1"/>
</dbReference>
<dbReference type="NCBIfam" id="TIGR02054">
    <property type="entry name" value="MerD"/>
    <property type="match status" value="1"/>
</dbReference>
<dbReference type="PANTHER" id="PTHR30204:SF93">
    <property type="entry name" value="HTH MERR-TYPE DOMAIN-CONTAINING PROTEIN"/>
    <property type="match status" value="1"/>
</dbReference>
<dbReference type="PANTHER" id="PTHR30204">
    <property type="entry name" value="REDOX-CYCLING DRUG-SENSING TRANSCRIPTIONAL ACTIVATOR SOXR"/>
    <property type="match status" value="1"/>
</dbReference>
<dbReference type="Pfam" id="PF13411">
    <property type="entry name" value="MerR_1"/>
    <property type="match status" value="1"/>
</dbReference>
<dbReference type="PRINTS" id="PR00040">
    <property type="entry name" value="HTHMERR"/>
</dbReference>
<dbReference type="SMART" id="SM00422">
    <property type="entry name" value="HTH_MERR"/>
    <property type="match status" value="1"/>
</dbReference>
<dbReference type="SUPFAM" id="SSF46955">
    <property type="entry name" value="Putative DNA-binding domain"/>
    <property type="match status" value="1"/>
</dbReference>
<dbReference type="PROSITE" id="PS50937">
    <property type="entry name" value="HTH_MERR_2"/>
    <property type="match status" value="1"/>
</dbReference>
<sequence length="121" mass="13014">MNAYPVSRLALDAGVSVHIVRDYLLRGLLRPVACTPGGYGLFDDAALQRLCFVRAAFEAGIGLDALARLCRALDAADGDEAAAQLALLRQFVERRREALADLEVQLATLPTEPAQHAESLP</sequence>
<proteinExistence type="predicted"/>
<organism>
    <name type="scientific">Pseudomonas aeruginosa</name>
    <dbReference type="NCBI Taxonomy" id="287"/>
    <lineage>
        <taxon>Bacteria</taxon>
        <taxon>Pseudomonadati</taxon>
        <taxon>Pseudomonadota</taxon>
        <taxon>Gammaproteobacteria</taxon>
        <taxon>Pseudomonadales</taxon>
        <taxon>Pseudomonadaceae</taxon>
        <taxon>Pseudomonas</taxon>
    </lineage>
</organism>
<keyword id="KW-0238">DNA-binding</keyword>
<keyword id="KW-0475">Mercuric resistance</keyword>
<keyword id="KW-0614">Plasmid</keyword>
<keyword id="KW-0804">Transcription</keyword>
<keyword id="KW-0805">Transcription regulation</keyword>
<keyword id="KW-0814">Transposable element</keyword>
<evidence type="ECO:0000255" key="1">
    <source>
        <dbReference type="PROSITE-ProRule" id="PRU00254"/>
    </source>
</evidence>